<gene>
    <name type="primary">ccdc102a</name>
    <name type="ORF">zgc:77294</name>
</gene>
<name>C102A_DANRE</name>
<evidence type="ECO:0000255" key="1"/>
<evidence type="ECO:0000256" key="2">
    <source>
        <dbReference type="SAM" id="MobiDB-lite"/>
    </source>
</evidence>
<feature type="chain" id="PRO_0000274402" description="Coiled-coil domain-containing protein 102A">
    <location>
        <begin position="1"/>
        <end position="581"/>
    </location>
</feature>
<feature type="region of interest" description="Disordered" evidence="2">
    <location>
        <begin position="1"/>
        <end position="61"/>
    </location>
</feature>
<feature type="region of interest" description="Disordered" evidence="2">
    <location>
        <begin position="156"/>
        <end position="219"/>
    </location>
</feature>
<feature type="region of interest" description="Disordered" evidence="2">
    <location>
        <begin position="496"/>
        <end position="517"/>
    </location>
</feature>
<feature type="region of interest" description="Disordered" evidence="2">
    <location>
        <begin position="534"/>
        <end position="581"/>
    </location>
</feature>
<feature type="coiled-coil region" evidence="1">
    <location>
        <begin position="70"/>
        <end position="164"/>
    </location>
</feature>
<feature type="coiled-coil region" evidence="1">
    <location>
        <begin position="270"/>
        <end position="541"/>
    </location>
</feature>
<feature type="compositionally biased region" description="Low complexity" evidence="2">
    <location>
        <begin position="39"/>
        <end position="59"/>
    </location>
</feature>
<feature type="compositionally biased region" description="Polar residues" evidence="2">
    <location>
        <begin position="161"/>
        <end position="184"/>
    </location>
</feature>
<feature type="compositionally biased region" description="Basic and acidic residues" evidence="2">
    <location>
        <begin position="185"/>
        <end position="202"/>
    </location>
</feature>
<feature type="compositionally biased region" description="Acidic residues" evidence="2">
    <location>
        <begin position="559"/>
        <end position="581"/>
    </location>
</feature>
<protein>
    <recommendedName>
        <fullName>Coiled-coil domain-containing protein 102A</fullName>
    </recommendedName>
</protein>
<accession>Q6NZW0</accession>
<dbReference type="EMBL" id="BC065950">
    <property type="protein sequence ID" value="AAH65950.1"/>
    <property type="molecule type" value="mRNA"/>
</dbReference>
<dbReference type="RefSeq" id="NP_991115.1">
    <property type="nucleotide sequence ID" value="NM_205552.1"/>
</dbReference>
<dbReference type="SMR" id="Q6NZW0"/>
<dbReference type="FunCoup" id="Q6NZW0">
    <property type="interactions" value="2306"/>
</dbReference>
<dbReference type="STRING" id="7955.ENSDARP00000143218"/>
<dbReference type="PaxDb" id="7955-ENSDARP00000016347"/>
<dbReference type="GeneID" id="325319"/>
<dbReference type="KEGG" id="dre:325319"/>
<dbReference type="AGR" id="ZFIN:ZDB-GENE-030131-4044"/>
<dbReference type="CTD" id="92922"/>
<dbReference type="ZFIN" id="ZDB-GENE-030131-4044">
    <property type="gene designation" value="ccdc102a"/>
</dbReference>
<dbReference type="eggNOG" id="ENOG502QSJ6">
    <property type="taxonomic scope" value="Eukaryota"/>
</dbReference>
<dbReference type="InParanoid" id="Q6NZW0"/>
<dbReference type="OrthoDB" id="5984396at2759"/>
<dbReference type="PhylomeDB" id="Q6NZW0"/>
<dbReference type="PRO" id="PR:Q6NZW0"/>
<dbReference type="Proteomes" id="UP000000437">
    <property type="component" value="Chromosome 7"/>
</dbReference>
<dbReference type="GO" id="GO:0016459">
    <property type="term" value="C:myosin complex"/>
    <property type="evidence" value="ECO:0007669"/>
    <property type="project" value="InterPro"/>
</dbReference>
<dbReference type="Gene3D" id="1.10.287.1490">
    <property type="match status" value="1"/>
</dbReference>
<dbReference type="InterPro" id="IPR002928">
    <property type="entry name" value="Myosin_tail"/>
</dbReference>
<dbReference type="PANTHER" id="PTHR46292">
    <property type="entry name" value="COILED-COIL DOMAIN-CONTAINING PROTEIN 102A"/>
    <property type="match status" value="1"/>
</dbReference>
<dbReference type="PANTHER" id="PTHR46292:SF1">
    <property type="entry name" value="COILED-COIL DOMAIN-CONTAINING PROTEIN 102A"/>
    <property type="match status" value="1"/>
</dbReference>
<dbReference type="Pfam" id="PF01576">
    <property type="entry name" value="Myosin_tail_1"/>
    <property type="match status" value="1"/>
</dbReference>
<dbReference type="SUPFAM" id="SSF57997">
    <property type="entry name" value="Tropomyosin"/>
    <property type="match status" value="1"/>
</dbReference>
<sequence length="581" mass="66795">MNHTPSPHMTEAAKSGAGLLCGLGLGPDRVRSPDSLTHTPSPSGGTPSSSPPLLLSPGLGCDGIGDWESREELRLRELEEARARAAQMEKTMRWWSDCTANWREKWSKVRAERNRARDEVRQLRQRLDALTKELTGARRERQELAAENEQLRLEAQRVRAEQSSPENASTAPESISSTASTHSNQPREAEIKQDNQDEEGVRDGPGSPEQEPVRDIGTDKLYKQKEMELLEALLRAKSEAPDSWDGRSASSLRSALSRQDRNRLLWEDLAALEEDTSKLNALQLRLDESQKVLLKEREDKHALIKNIEKLEAELSQWKLKYEELNKSKQEALKQLNLLKEVHQDELGRMSEDLEDELGARTNMDKKLAELRTEMERLQVENAAEWGRRERLETEKLALERENKKLRTQMEDLEEQLARKRRQAASALDTDLKTIQSELFERNKELADLRHVHSKVKKQYQEKMAELTHANRRVEQHEAEVKKLRLRVEELKKELGQAEDELDEAHNQTRKLQRSLDEQVEQSENLQVQLEHLQSRLRRQQNPGLFGKMRTSASSRFGPEDADGPPSDPDEDEEEELQLQIP</sequence>
<keyword id="KW-0175">Coiled coil</keyword>
<keyword id="KW-1185">Reference proteome</keyword>
<reference key="1">
    <citation type="submission" date="2004-02" db="EMBL/GenBank/DDBJ databases">
        <authorList>
            <consortium name="NIH - Zebrafish Gene Collection (ZGC) project"/>
        </authorList>
    </citation>
    <scope>NUCLEOTIDE SEQUENCE [LARGE SCALE MRNA]</scope>
    <source>
        <tissue>Embryo</tissue>
    </source>
</reference>
<organism>
    <name type="scientific">Danio rerio</name>
    <name type="common">Zebrafish</name>
    <name type="synonym">Brachydanio rerio</name>
    <dbReference type="NCBI Taxonomy" id="7955"/>
    <lineage>
        <taxon>Eukaryota</taxon>
        <taxon>Metazoa</taxon>
        <taxon>Chordata</taxon>
        <taxon>Craniata</taxon>
        <taxon>Vertebrata</taxon>
        <taxon>Euteleostomi</taxon>
        <taxon>Actinopterygii</taxon>
        <taxon>Neopterygii</taxon>
        <taxon>Teleostei</taxon>
        <taxon>Ostariophysi</taxon>
        <taxon>Cypriniformes</taxon>
        <taxon>Danionidae</taxon>
        <taxon>Danioninae</taxon>
        <taxon>Danio</taxon>
    </lineage>
</organism>
<proteinExistence type="evidence at transcript level"/>